<gene>
    <name type="primary">psme4b</name>
</gene>
<name>PSM4B_DANRE</name>
<comment type="function">
    <text evidence="1">Associated component of the proteasome that specifically recognizes acetylated histones and promotes ATP- and ubiquitin-independent degradation of core histones during DNA damage response. Recognizes and binds acetylated histones via its bromodomain-like (BRDL) region and activates the proteasome by opening the gated channel for substrate entry. Binds to the core proteasome via its C-terminus, which occupies the same binding sites as the proteasomal ATPases, opening the closed structure of the proteasome via an active gating mechanism. involved in DNA damage response in somatic cells: binds to acetylated histones and promotes degradation of histones (By similarity).</text>
</comment>
<comment type="subunit">
    <text evidence="1">Homodimer. Interacts with the 20S and 26S proteasomes (By similarity).</text>
</comment>
<comment type="subcellular location">
    <subcellularLocation>
        <location evidence="1">Cytoplasm</location>
        <location evidence="1">Cytosol</location>
    </subcellularLocation>
    <subcellularLocation>
        <location evidence="1">Nucleus</location>
    </subcellularLocation>
    <subcellularLocation>
        <location evidence="1">Nucleus speckle</location>
    </subcellularLocation>
</comment>
<comment type="domain">
    <text evidence="1">The bromodomain-like (BRDL) region specifically recognizes and binds acetylated histones.</text>
</comment>
<comment type="similarity">
    <text evidence="2">Belongs to the BLM10 family.</text>
</comment>
<protein>
    <recommendedName>
        <fullName>Proteasome activator complex subunit 4B</fullName>
    </recommendedName>
    <alternativeName>
        <fullName>Proteasome activator PA200-B</fullName>
    </alternativeName>
</protein>
<feature type="chain" id="PRO_0000423301" description="Proteasome activator complex subunit 4B">
    <location>
        <begin position="1"/>
        <end position="1825"/>
    </location>
</feature>
<feature type="repeat" description="HEAT 1">
    <location>
        <begin position="458"/>
        <end position="502"/>
    </location>
</feature>
<feature type="repeat" description="HEAT 2">
    <location>
        <begin position="981"/>
        <end position="1020"/>
    </location>
</feature>
<feature type="repeat" description="HEAT 3">
    <location>
        <begin position="1162"/>
        <end position="1200"/>
    </location>
</feature>
<feature type="repeat" description="HEAT 4">
    <location>
        <begin position="1336"/>
        <end position="1374"/>
    </location>
</feature>
<feature type="repeat" description="HEAT 5">
    <location>
        <begin position="1618"/>
        <end position="1656"/>
    </location>
</feature>
<feature type="repeat" description="HEAT 6">
    <location>
        <begin position="1662"/>
        <end position="1700"/>
    </location>
</feature>
<feature type="region of interest" description="Bromodomain-like (BRDL)" evidence="1">
    <location>
        <begin position="1632"/>
        <end position="1720"/>
    </location>
</feature>
<reference key="1">
    <citation type="journal article" date="2013" name="Nature">
        <title>The zebrafish reference genome sequence and its relationship to the human genome.</title>
        <authorList>
            <person name="Howe K."/>
            <person name="Clark M.D."/>
            <person name="Torroja C.F."/>
            <person name="Torrance J."/>
            <person name="Berthelot C."/>
            <person name="Muffato M."/>
            <person name="Collins J.E."/>
            <person name="Humphray S."/>
            <person name="McLaren K."/>
            <person name="Matthews L."/>
            <person name="McLaren S."/>
            <person name="Sealy I."/>
            <person name="Caccamo M."/>
            <person name="Churcher C."/>
            <person name="Scott C."/>
            <person name="Barrett J.C."/>
            <person name="Koch R."/>
            <person name="Rauch G.J."/>
            <person name="White S."/>
            <person name="Chow W."/>
            <person name="Kilian B."/>
            <person name="Quintais L.T."/>
            <person name="Guerra-Assuncao J.A."/>
            <person name="Zhou Y."/>
            <person name="Gu Y."/>
            <person name="Yen J."/>
            <person name="Vogel J.H."/>
            <person name="Eyre T."/>
            <person name="Redmond S."/>
            <person name="Banerjee R."/>
            <person name="Chi J."/>
            <person name="Fu B."/>
            <person name="Langley E."/>
            <person name="Maguire S.F."/>
            <person name="Laird G.K."/>
            <person name="Lloyd D."/>
            <person name="Kenyon E."/>
            <person name="Donaldson S."/>
            <person name="Sehra H."/>
            <person name="Almeida-King J."/>
            <person name="Loveland J."/>
            <person name="Trevanion S."/>
            <person name="Jones M."/>
            <person name="Quail M."/>
            <person name="Willey D."/>
            <person name="Hunt A."/>
            <person name="Burton J."/>
            <person name="Sims S."/>
            <person name="McLay K."/>
            <person name="Plumb B."/>
            <person name="Davis J."/>
            <person name="Clee C."/>
            <person name="Oliver K."/>
            <person name="Clark R."/>
            <person name="Riddle C."/>
            <person name="Elliot D."/>
            <person name="Threadgold G."/>
            <person name="Harden G."/>
            <person name="Ware D."/>
            <person name="Begum S."/>
            <person name="Mortimore B."/>
            <person name="Kerry G."/>
            <person name="Heath P."/>
            <person name="Phillimore B."/>
            <person name="Tracey A."/>
            <person name="Corby N."/>
            <person name="Dunn M."/>
            <person name="Johnson C."/>
            <person name="Wood J."/>
            <person name="Clark S."/>
            <person name="Pelan S."/>
            <person name="Griffiths G."/>
            <person name="Smith M."/>
            <person name="Glithero R."/>
            <person name="Howden P."/>
            <person name="Barker N."/>
            <person name="Lloyd C."/>
            <person name="Stevens C."/>
            <person name="Harley J."/>
            <person name="Holt K."/>
            <person name="Panagiotidis G."/>
            <person name="Lovell J."/>
            <person name="Beasley H."/>
            <person name="Henderson C."/>
            <person name="Gordon D."/>
            <person name="Auger K."/>
            <person name="Wright D."/>
            <person name="Collins J."/>
            <person name="Raisen C."/>
            <person name="Dyer L."/>
            <person name="Leung K."/>
            <person name="Robertson L."/>
            <person name="Ambridge K."/>
            <person name="Leongamornlert D."/>
            <person name="McGuire S."/>
            <person name="Gilderthorp R."/>
            <person name="Griffiths C."/>
            <person name="Manthravadi D."/>
            <person name="Nichol S."/>
            <person name="Barker G."/>
            <person name="Whitehead S."/>
            <person name="Kay M."/>
            <person name="Brown J."/>
            <person name="Murnane C."/>
            <person name="Gray E."/>
            <person name="Humphries M."/>
            <person name="Sycamore N."/>
            <person name="Barker D."/>
            <person name="Saunders D."/>
            <person name="Wallis J."/>
            <person name="Babbage A."/>
            <person name="Hammond S."/>
            <person name="Mashreghi-Mohammadi M."/>
            <person name="Barr L."/>
            <person name="Martin S."/>
            <person name="Wray P."/>
            <person name="Ellington A."/>
            <person name="Matthews N."/>
            <person name="Ellwood M."/>
            <person name="Woodmansey R."/>
            <person name="Clark G."/>
            <person name="Cooper J."/>
            <person name="Tromans A."/>
            <person name="Grafham D."/>
            <person name="Skuce C."/>
            <person name="Pandian R."/>
            <person name="Andrews R."/>
            <person name="Harrison E."/>
            <person name="Kimberley A."/>
            <person name="Garnett J."/>
            <person name="Fosker N."/>
            <person name="Hall R."/>
            <person name="Garner P."/>
            <person name="Kelly D."/>
            <person name="Bird C."/>
            <person name="Palmer S."/>
            <person name="Gehring I."/>
            <person name="Berger A."/>
            <person name="Dooley C.M."/>
            <person name="Ersan-Urun Z."/>
            <person name="Eser C."/>
            <person name="Geiger H."/>
            <person name="Geisler M."/>
            <person name="Karotki L."/>
            <person name="Kirn A."/>
            <person name="Konantz J."/>
            <person name="Konantz M."/>
            <person name="Oberlander M."/>
            <person name="Rudolph-Geiger S."/>
            <person name="Teucke M."/>
            <person name="Lanz C."/>
            <person name="Raddatz G."/>
            <person name="Osoegawa K."/>
            <person name="Zhu B."/>
            <person name="Rapp A."/>
            <person name="Widaa S."/>
            <person name="Langford C."/>
            <person name="Yang F."/>
            <person name="Schuster S.C."/>
            <person name="Carter N.P."/>
            <person name="Harrow J."/>
            <person name="Ning Z."/>
            <person name="Herrero J."/>
            <person name="Searle S.M."/>
            <person name="Enright A."/>
            <person name="Geisler R."/>
            <person name="Plasterk R.H."/>
            <person name="Lee C."/>
            <person name="Westerfield M."/>
            <person name="de Jong P.J."/>
            <person name="Zon L.I."/>
            <person name="Postlethwait J.H."/>
            <person name="Nusslein-Volhard C."/>
            <person name="Hubbard T.J."/>
            <person name="Roest Crollius H."/>
            <person name="Rogers J."/>
            <person name="Stemple D.L."/>
        </authorList>
    </citation>
    <scope>NUCLEOTIDE SEQUENCE [LARGE SCALE GENOMIC DNA]</scope>
    <source>
        <strain>Tuebingen</strain>
    </source>
</reference>
<keyword id="KW-0963">Cytoplasm</keyword>
<keyword id="KW-0227">DNA damage</keyword>
<keyword id="KW-0234">DNA repair</keyword>
<keyword id="KW-0539">Nucleus</keyword>
<keyword id="KW-0647">Proteasome</keyword>
<keyword id="KW-1185">Reference proteome</keyword>
<keyword id="KW-0677">Repeat</keyword>
<organism>
    <name type="scientific">Danio rerio</name>
    <name type="common">Zebrafish</name>
    <name type="synonym">Brachydanio rerio</name>
    <dbReference type="NCBI Taxonomy" id="7955"/>
    <lineage>
        <taxon>Eukaryota</taxon>
        <taxon>Metazoa</taxon>
        <taxon>Chordata</taxon>
        <taxon>Craniata</taxon>
        <taxon>Vertebrata</taxon>
        <taxon>Euteleostomi</taxon>
        <taxon>Actinopterygii</taxon>
        <taxon>Neopterygii</taxon>
        <taxon>Teleostei</taxon>
        <taxon>Ostariophysi</taxon>
        <taxon>Cypriniformes</taxon>
        <taxon>Danionidae</taxon>
        <taxon>Danioninae</taxon>
        <taxon>Danio</taxon>
    </lineage>
</organism>
<accession>F1R2X6</accession>
<sequence length="1825" mass="209069">MKKEQAEILGFVPQKEIVYNKLLPYADQLDRESNDILAQIKGNLGRAVQLRELWPGVLFWTRKLSTYLRLYGRKFSKEDHVLFIKLLYELVTIPKLEISMMQSFARLLVNLLKKKELLSRDDLELPWRPLYDLYESILYSKTEHLGLNWFPNSVENVLKTLVKSCRVPESATQEMLDEWRPLLCPFDVTMQKAIGYFELFLPTIMPPEQHDKGFKLWFDEMMNLWVSVQNLPAWEGNLVNLFARLANDNIGYVNWDPYIPKIFTRILRSFNLPVGTSQMVVPRYLTNSYDIGHVVLWISSMLGGPQNQSQKQLNGLFSSIASFYHPSNNGRWLMKLMKLLQRLPASIVRRLHRERYKKPCWITPVPSTHKLTDQDVTDFVESMKQPVLMAMFSKTGSMDAAQALQNLALMRPELVIPPVLEKTYPAMETLTEPHQLTATLSCMIGMARSLLSGGRHYPEGPAHVLPLLMRALPGVDPNDFSKCMITFQFIATFTTLVPLVDCSSALHDKNDLTEMERELCSASAEFEDFVLQFMDRCFALIDSSTLEQTREETETEKMTHLESLVELGLSSTFSTILTQCSMEIFKVALEKVFNFATTNIFETRVAGRMVADMCRAASKCHPAESLRLFVPHCCNAITHLTANEDVSNEEELDKELLWNLQLLSEVTRVDGEKLLPYRTQLVQILQLTLRLRCKQGYSLACNLLHHVLRSTALIYPTDYCSVPGGFSRPLQEYLPIKDWGRPGDLWNLEIQWHVPSTEETAFVFYVLDLLLQPELQRLQRYAQGEQEMSRDDVLQSLCIVQHCLLGAGSMLPPLDGSTVTGLVPSMVNLEETKLYIGVDYDQSRENYREAVCKVMRQLLHYILEHSEDDTKSLFAIIKIISDLMHFKGSHKHEFDSRWKSFTLVKKSMENRLHGKKQHIRALLIDRVLLQHEMRKLLVEGCEYKTVHQDLLRDLLRLSTSTYSQVRSKAQNVLFTALGTYNFCCRDITPRVLEFLEPTRTDVTQQQFKGALYCLLGNHCGVCLANLHDWDCIAQTWPAIVRSGLSSAMSLEKPSIVRLFDDLADKVHRQYETIGIDFTVPENAVFLGRSITNSSQPTPHMGTPEDQELQQGLAVQQAKNREAEQKYEKLVKDLLECLDDRDLPWKFEHIAIGFLSLLLRDDYPLPAPAVFFFVQSLNHDALVVRKMAIAAVAGILKQLKRPRKKIPVNPCDISGVTEPEELEAGDRPGNDWLQYHSESLPNSQQDWDAFCFVEKTHWGYYSWPKKLMVYAPAAEQPKDLAPDTMSEREAIINDHFTDPTFINQLIKFLSLEDRKGKDKFNPRRFCLFKGLFRNYSDAFLPVLKPHMERLANDSHESTQRCVAEIIAGLIRGSKHWSFGKVEALWAFLIPLMRTALSNITVETYADWGTCVATACESRDPRKLHWLLEMLMECPLSGEGGSFVDACHLYVLQGGLAQQEWRVPELLHRLLSYLEPKLTQVYKNVRERIGSVLTYIFMIDVALPYTLPTKSPHIAEFTERILSQLKPLIEGDEEIQNHVVEENGVGEQDERTQAIKLLKTVLKWLMASAGRSFSTPVPQQLQLLPLLFKIAPVENDDSYDELKRDAKTCLSLMSQGLLYPEQIPMVLAVLHEIAGSSSWHARYSVLTYLQTMVFYNLFTILSSEQCVQGVRALVIRLLEDEQLEVREMAATTLSGFLQCNFLAMDSSMQTHFEALCKTRLPKKRKRDVGSVMDTIPSVDLVRRHAGVLGLSACILSSPYDVPTWMPQLLMDLSAHLNDTQPIEMTVKKTLSNFRRTHHDNWLEHKQQFTDDQLVVLTDLLVSPCYYA</sequence>
<evidence type="ECO:0000250" key="1"/>
<evidence type="ECO:0000305" key="2"/>
<proteinExistence type="inferred from homology"/>
<dbReference type="EMBL" id="AL935052">
    <property type="status" value="NOT_ANNOTATED_CDS"/>
    <property type="molecule type" value="Genomic_DNA"/>
</dbReference>
<dbReference type="EMBL" id="CU459175">
    <property type="status" value="NOT_ANNOTATED_CDS"/>
    <property type="molecule type" value="Genomic_DNA"/>
</dbReference>
<dbReference type="SMR" id="F1R2X6"/>
<dbReference type="FunCoup" id="F1R2X6">
    <property type="interactions" value="1764"/>
</dbReference>
<dbReference type="STRING" id="7955.ENSDARP00000127351"/>
<dbReference type="PaxDb" id="7955-ENSDARP00000127351"/>
<dbReference type="eggNOG" id="KOG1851">
    <property type="taxonomic scope" value="Eukaryota"/>
</dbReference>
<dbReference type="InParanoid" id="F1R2X6"/>
<dbReference type="OrthoDB" id="6511336at2759"/>
<dbReference type="TreeFam" id="TF106237"/>
<dbReference type="PRO" id="PR:F1R2X6"/>
<dbReference type="Proteomes" id="UP000000437">
    <property type="component" value="Unplaced"/>
</dbReference>
<dbReference type="GO" id="GO:0005829">
    <property type="term" value="C:cytosol"/>
    <property type="evidence" value="ECO:0000250"/>
    <property type="project" value="UniProtKB"/>
</dbReference>
<dbReference type="GO" id="GO:0016607">
    <property type="term" value="C:nuclear speck"/>
    <property type="evidence" value="ECO:0007669"/>
    <property type="project" value="UniProtKB-SubCell"/>
</dbReference>
<dbReference type="GO" id="GO:0005634">
    <property type="term" value="C:nucleus"/>
    <property type="evidence" value="ECO:0000250"/>
    <property type="project" value="UniProtKB"/>
</dbReference>
<dbReference type="GO" id="GO:1990111">
    <property type="term" value="C:spermatoproteasome complex"/>
    <property type="evidence" value="ECO:0000250"/>
    <property type="project" value="UniProtKB"/>
</dbReference>
<dbReference type="GO" id="GO:0070577">
    <property type="term" value="F:lysine-acetylated histone binding"/>
    <property type="evidence" value="ECO:0007669"/>
    <property type="project" value="InterPro"/>
</dbReference>
<dbReference type="GO" id="GO:0016504">
    <property type="term" value="F:peptidase activator activity"/>
    <property type="evidence" value="ECO:0000250"/>
    <property type="project" value="UniProtKB"/>
</dbReference>
<dbReference type="GO" id="GO:0070628">
    <property type="term" value="F:proteasome binding"/>
    <property type="evidence" value="ECO:0007669"/>
    <property type="project" value="InterPro"/>
</dbReference>
<dbReference type="GO" id="GO:0006974">
    <property type="term" value="P:DNA damage response"/>
    <property type="evidence" value="ECO:0000250"/>
    <property type="project" value="UniProtKB"/>
</dbReference>
<dbReference type="GO" id="GO:0006281">
    <property type="term" value="P:DNA repair"/>
    <property type="evidence" value="ECO:0000250"/>
    <property type="project" value="UniProtKB"/>
</dbReference>
<dbReference type="GO" id="GO:0010499">
    <property type="term" value="P:proteasomal ubiquitin-independent protein catabolic process"/>
    <property type="evidence" value="ECO:0000250"/>
    <property type="project" value="UniProtKB"/>
</dbReference>
<dbReference type="GO" id="GO:0035092">
    <property type="term" value="P:sperm DNA condensation"/>
    <property type="evidence" value="ECO:0000250"/>
    <property type="project" value="UniProtKB"/>
</dbReference>
<dbReference type="FunFam" id="1.25.10.10:FF:000183">
    <property type="entry name" value="Proteasome activator complex subunit 4"/>
    <property type="match status" value="1"/>
</dbReference>
<dbReference type="Gene3D" id="1.25.10.10">
    <property type="entry name" value="Leucine-rich Repeat Variant"/>
    <property type="match status" value="1"/>
</dbReference>
<dbReference type="InterPro" id="IPR011989">
    <property type="entry name" value="ARM-like"/>
</dbReference>
<dbReference type="InterPro" id="IPR016024">
    <property type="entry name" value="ARM-type_fold"/>
</dbReference>
<dbReference type="InterPro" id="IPR032430">
    <property type="entry name" value="Blm10_mid"/>
</dbReference>
<dbReference type="InterPro" id="IPR055455">
    <property type="entry name" value="HEAT_PSME4"/>
</dbReference>
<dbReference type="InterPro" id="IPR035309">
    <property type="entry name" value="PSME4"/>
</dbReference>
<dbReference type="InterPro" id="IPR021843">
    <property type="entry name" value="PSME4_C"/>
</dbReference>
<dbReference type="PANTHER" id="PTHR32170">
    <property type="entry name" value="PROTEASOME ACTIVATOR COMPLEX SUBUNIT 4"/>
    <property type="match status" value="1"/>
</dbReference>
<dbReference type="PANTHER" id="PTHR32170:SF3">
    <property type="entry name" value="PROTEASOME ACTIVATOR COMPLEX SUBUNIT 4"/>
    <property type="match status" value="1"/>
</dbReference>
<dbReference type="Pfam" id="PF23096">
    <property type="entry name" value="HEAT_PSME4"/>
    <property type="match status" value="1"/>
</dbReference>
<dbReference type="Pfam" id="PF16507">
    <property type="entry name" value="HEAT_PSME4_mid"/>
    <property type="match status" value="1"/>
</dbReference>
<dbReference type="Pfam" id="PF11919">
    <property type="entry name" value="PSME4_C"/>
    <property type="match status" value="1"/>
</dbReference>
<dbReference type="SUPFAM" id="SSF48371">
    <property type="entry name" value="ARM repeat"/>
    <property type="match status" value="2"/>
</dbReference>